<evidence type="ECO:0000250" key="1">
    <source>
        <dbReference type="UniProtKB" id="P01514"/>
    </source>
</evidence>
<evidence type="ECO:0000255" key="2"/>
<evidence type="ECO:0000269" key="3">
    <source>
    </source>
</evidence>
<evidence type="ECO:0000269" key="4">
    <source>
    </source>
</evidence>
<evidence type="ECO:0000269" key="5">
    <source>
    </source>
</evidence>
<evidence type="ECO:0000269" key="6">
    <source>
    </source>
</evidence>
<evidence type="ECO:0000303" key="7">
    <source>
    </source>
</evidence>
<evidence type="ECO:0000303" key="8">
    <source>
    </source>
</evidence>
<evidence type="ECO:0000303" key="9">
    <source>
    </source>
</evidence>
<evidence type="ECO:0000303" key="10">
    <source>
    </source>
</evidence>
<evidence type="ECO:0000305" key="11"/>
<evidence type="ECO:0000305" key="12">
    <source>
    </source>
</evidence>
<evidence type="ECO:0000305" key="13">
    <source>
    </source>
</evidence>
<keyword id="KW-0027">Amidation</keyword>
<keyword id="KW-0145">Chemotaxis</keyword>
<keyword id="KW-0204">Cytolysis</keyword>
<keyword id="KW-0903">Direct protein sequencing</keyword>
<keyword id="KW-0297">G-protein coupled receptor</keyword>
<keyword id="KW-1213">G-protein coupled receptor impairing toxin</keyword>
<keyword id="KW-0467">Mast cell degranulation</keyword>
<keyword id="KW-0472">Membrane</keyword>
<keyword id="KW-0675">Receptor</keyword>
<keyword id="KW-0964">Secreted</keyword>
<keyword id="KW-1052">Target cell membrane</keyword>
<keyword id="KW-1053">Target membrane</keyword>
<keyword id="KW-0800">Toxin</keyword>
<keyword id="KW-0807">Transducer</keyword>
<organism>
    <name type="scientific">Polybia paulista</name>
    <name type="common">Neotropical social wasp</name>
    <name type="synonym">Swarm-founding polistine wasp</name>
    <dbReference type="NCBI Taxonomy" id="291283"/>
    <lineage>
        <taxon>Eukaryota</taxon>
        <taxon>Metazoa</taxon>
        <taxon>Ecdysozoa</taxon>
        <taxon>Arthropoda</taxon>
        <taxon>Hexapoda</taxon>
        <taxon>Insecta</taxon>
        <taxon>Pterygota</taxon>
        <taxon>Neoptera</taxon>
        <taxon>Endopterygota</taxon>
        <taxon>Hymenoptera</taxon>
        <taxon>Apocrita</taxon>
        <taxon>Aculeata</taxon>
        <taxon>Vespoidea</taxon>
        <taxon>Vespidae</taxon>
        <taxon>Polistinae</taxon>
        <taxon>Epiponini</taxon>
        <taxon>Polybia</taxon>
    </lineage>
</organism>
<name>MAST3_POLPI</name>
<dbReference type="GO" id="GO:0005576">
    <property type="term" value="C:extracellular region"/>
    <property type="evidence" value="ECO:0000314"/>
    <property type="project" value="UniProtKB"/>
</dbReference>
<dbReference type="GO" id="GO:0016020">
    <property type="term" value="C:membrane"/>
    <property type="evidence" value="ECO:0007669"/>
    <property type="project" value="UniProtKB-KW"/>
</dbReference>
<dbReference type="GO" id="GO:0044218">
    <property type="term" value="C:other organism cell membrane"/>
    <property type="evidence" value="ECO:0007669"/>
    <property type="project" value="UniProtKB-KW"/>
</dbReference>
<dbReference type="GO" id="GO:0004930">
    <property type="term" value="F:G protein-coupled receptor activity"/>
    <property type="evidence" value="ECO:0007669"/>
    <property type="project" value="UniProtKB-KW"/>
</dbReference>
<dbReference type="GO" id="GO:0090729">
    <property type="term" value="F:toxin activity"/>
    <property type="evidence" value="ECO:0007669"/>
    <property type="project" value="UniProtKB-KW"/>
</dbReference>
<dbReference type="GO" id="GO:0006935">
    <property type="term" value="P:chemotaxis"/>
    <property type="evidence" value="ECO:0007669"/>
    <property type="project" value="UniProtKB-KW"/>
</dbReference>
<dbReference type="GO" id="GO:0031640">
    <property type="term" value="P:killing of cells of another organism"/>
    <property type="evidence" value="ECO:0007669"/>
    <property type="project" value="UniProtKB-KW"/>
</dbReference>
<dbReference type="GO" id="GO:0044480">
    <property type="term" value="P:venom-mediated mast cell degranulation in another organism"/>
    <property type="evidence" value="ECO:0000314"/>
    <property type="project" value="UniProtKB"/>
</dbReference>
<dbReference type="InterPro" id="IPR013214">
    <property type="entry name" value="Mastoparan_peptide"/>
</dbReference>
<dbReference type="Pfam" id="PF08251">
    <property type="entry name" value="Mastoparan_2"/>
    <property type="match status" value="1"/>
</dbReference>
<proteinExistence type="evidence at protein level"/>
<accession>P84914</accession>
<comment type="function">
    <text evidence="1 3 4 5 6">Antimicrobial peptide (PubMed:19463874). Is active against both Gram-negative and -positive bacteria (Escherichia coli (MIC=38 uM), Pseudomonas aeruginosa (MIC=310 uM), Staphylococcus aureus (MIC=19 uM), and Bacillus cereus (MIC=38 uM)) (PubMed:19463874). Also causes moderate mast cell degranulation (ED(50)=100 uM) and low hemolysis (MIC=50 uM), and exhibits chemotactic activity for polymorphonucleated leukocytes (PMNL) (PubMed:15150833, PubMed:19463874). Its mast cell degranulation activity is probably due its interaction with G-proteins, as well as interaction with certain regulaotry targets of exocytosisis at the level of mast cell endosomal membranes, such as the Rho GTPase CDC42 and exocyst complex component 7 (EXOC7) as components of the calcium-independent Fc-Epsilon-RI-mediated exocytosis pathway, the synaptosomal associated protein 29 (SNAP29), and GTP-binding protein Rab3D (RAB3D) as components of the calcium-dependent Fc-Epsilon-RI-mediated exocytosis pathway, and the Ras-related protein MRAS, a protein related to the mediation of cell shaping and proliferation following exocytosis (By similarity) (PubMed:22761183). In addition, this peptide shows trypanocidal effect on all developmental forms (epimastigote, trypomastigote and amastigote) of the Chagas disease parasite Trypanosoma cruzi Y strain, probably through the inhibition of the glycolysis enzyme GAPDH, as suggested by molecular docking (PubMed:28826757).</text>
</comment>
<comment type="subcellular location">
    <subcellularLocation>
        <location evidence="3 4">Secreted</location>
    </subcellularLocation>
    <subcellularLocation>
        <location evidence="13">Target cell membrane</location>
    </subcellularLocation>
    <text evidence="13">Forms amphipathic alpha-helical conformations under membrane-mimetic conditions.</text>
</comment>
<comment type="tissue specificity">
    <text evidence="12">Expressed by the venom gland.</text>
</comment>
<comment type="mass spectrometry"/>
<comment type="similarity">
    <text evidence="2">Belongs to the MCD family. Mastoparan subfamily.</text>
</comment>
<feature type="peptide" id="PRO_0000248507" description="Polybia-mastoparan-III" evidence="3">
    <location>
        <begin position="1"/>
        <end position="14"/>
    </location>
</feature>
<feature type="modified residue" description="Leucine amide" evidence="3">
    <location>
        <position position="14"/>
    </location>
</feature>
<sequence>IDWLKLGKMVMDVL</sequence>
<reference key="1">
    <citation type="journal article" date="2004" name="Rapid Commun. Mass Spectrom.">
        <title>Mass spectrometric characterization of two novel inflammatory peptides from the venom of the social wasp Polybia paulista.</title>
        <authorList>
            <person name="de Souza B.M."/>
            <person name="Marques M.R."/>
            <person name="Tomazela D.M."/>
            <person name="Eberlin M.N."/>
            <person name="Mendes M.A."/>
            <person name="Palma M.S."/>
        </authorList>
    </citation>
    <scope>PROTEIN SEQUENCE</scope>
    <scope>FUNCTION</scope>
    <scope>SUBCELLULAR LOCATION</scope>
    <scope>AMIDATION AT LEU-14</scope>
    <scope>MASS SPECTROMETRY</scope>
    <source>
        <tissue>Venom</tissue>
    </source>
</reference>
<reference key="2">
    <citation type="journal article" date="2009" name="Peptides">
        <title>Characterization of two novel polyfunctional mastoparan peptides from the venom of the social wasp Polybia paulista.</title>
        <authorList>
            <person name="de Souza B.M."/>
            <person name="da Silva A.V."/>
            <person name="Resende V.M."/>
            <person name="Arcuri H.A."/>
            <person name="Dos Santos Cabrera M.P."/>
            <person name="Ruggiero Neto J."/>
            <person name="Palma M.S."/>
        </authorList>
    </citation>
    <scope>PROTEIN SEQUENCE</scope>
    <scope>SYNTHESIS</scope>
    <scope>SUBCELLULAR LOCATION</scope>
    <scope>AMIDATION AT LEU-14</scope>
    <scope>3D-STRUCTURE MODELING</scope>
    <source>
        <tissue>Venom</tissue>
    </source>
</reference>
<reference key="3">
    <citation type="journal article" date="2012" name="Proteomics">
        <title>Proteomic profiling of the molecular targets of interactions of the mastoparan peptide Protopolybia MP-III at the level of endosomal membranes from rat mast cells.</title>
        <authorList>
            <person name="dos Santos L.D."/>
            <person name="Aparecido dos Santos Pinto J.R."/>
            <person name="Menegasso A.R."/>
            <person name="Saidemberg D.M."/>
            <person name="Caviquioli Garcia A.M."/>
            <person name="Palma M.S."/>
        </authorList>
    </citation>
    <scope>FUNCTION</scope>
    <scope>SYNTHESIS</scope>
</reference>
<reference key="4">
    <citation type="journal article" date="2017" name="Toxicon">
        <title>Trypanocidal activity of mastoparan from Polybia paulista wasp venom by interaction with TcGAPDH.</title>
        <authorList>
            <person name="Vinhote J.F.C."/>
            <person name="Lima D.B."/>
            <person name="Menezes R.R.P.P.B."/>
            <person name="Mello C.P."/>
            <person name="de Souza B.M."/>
            <person name="Havt A."/>
            <person name="Palma M.S."/>
            <person name="Santos R.P.D."/>
            <person name="Albuquerque E.L."/>
            <person name="Freire V.N."/>
            <person name="Martins A.M.C."/>
        </authorList>
    </citation>
    <scope>FUNCTION</scope>
</reference>
<protein>
    <recommendedName>
        <fullName evidence="8">Polybia-mastoparan-III</fullName>
        <shortName evidence="8 9">Polybia-MP-III</shortName>
        <shortName evidence="11">Polybia-MPIII</shortName>
    </recommendedName>
    <alternativeName>
        <fullName evidence="10">Mastoparan peptide</fullName>
        <shortName evidence="10">MP</shortName>
    </alternativeName>
    <alternativeName>
        <fullName evidence="7">Venom protein 13b</fullName>
        <shortName evidence="12">VP13b</shortName>
    </alternativeName>
</protein>